<dbReference type="EMBL" id="L02118">
    <property type="protein sequence ID" value="AAC38004.1"/>
    <property type="molecule type" value="mRNA"/>
</dbReference>
<dbReference type="RefSeq" id="XP_034404346.1">
    <property type="nucleotide sequence ID" value="XM_034548455.1"/>
</dbReference>
<dbReference type="SMR" id="P45640"/>
<dbReference type="Ensembl" id="ENSCLMT00005028332.1">
    <property type="protein sequence ID" value="ENSCLMP00005027155.1"/>
    <property type="gene ID" value="ENSCLMG00005013242.1"/>
</dbReference>
<dbReference type="GeneID" id="117741421"/>
<dbReference type="GeneTree" id="ENSGT00950000182818"/>
<dbReference type="OrthoDB" id="9945472at2759"/>
<dbReference type="Proteomes" id="UP000694565">
    <property type="component" value="Unplaced"/>
</dbReference>
<dbReference type="GO" id="GO:0005615">
    <property type="term" value="C:extracellular space"/>
    <property type="evidence" value="ECO:0007669"/>
    <property type="project" value="TreeGrafter"/>
</dbReference>
<dbReference type="GO" id="GO:0070186">
    <property type="term" value="F:growth hormone activity"/>
    <property type="evidence" value="ECO:0007669"/>
    <property type="project" value="TreeGrafter"/>
</dbReference>
<dbReference type="GO" id="GO:0005131">
    <property type="term" value="F:growth hormone receptor binding"/>
    <property type="evidence" value="ECO:0007669"/>
    <property type="project" value="TreeGrafter"/>
</dbReference>
<dbReference type="GO" id="GO:0048513">
    <property type="term" value="P:animal organ development"/>
    <property type="evidence" value="ECO:0007669"/>
    <property type="project" value="TreeGrafter"/>
</dbReference>
<dbReference type="GO" id="GO:0060396">
    <property type="term" value="P:growth hormone receptor signaling pathway"/>
    <property type="evidence" value="ECO:0007669"/>
    <property type="project" value="TreeGrafter"/>
</dbReference>
<dbReference type="GO" id="GO:0045927">
    <property type="term" value="P:positive regulation of growth"/>
    <property type="evidence" value="ECO:0007669"/>
    <property type="project" value="TreeGrafter"/>
</dbReference>
<dbReference type="GO" id="GO:0046427">
    <property type="term" value="P:positive regulation of receptor signaling pathway via JAK-STAT"/>
    <property type="evidence" value="ECO:0007669"/>
    <property type="project" value="TreeGrafter"/>
</dbReference>
<dbReference type="GO" id="GO:0031667">
    <property type="term" value="P:response to nutrient levels"/>
    <property type="evidence" value="ECO:0007669"/>
    <property type="project" value="TreeGrafter"/>
</dbReference>
<dbReference type="CDD" id="cd10286">
    <property type="entry name" value="somatolactin"/>
    <property type="match status" value="1"/>
</dbReference>
<dbReference type="FunFam" id="1.20.1250.10:FF:000042">
    <property type="entry name" value="Somatolactin alpha"/>
    <property type="match status" value="1"/>
</dbReference>
<dbReference type="Gene3D" id="1.20.1250.10">
    <property type="match status" value="1"/>
</dbReference>
<dbReference type="InterPro" id="IPR009079">
    <property type="entry name" value="4_helix_cytokine-like_core"/>
</dbReference>
<dbReference type="InterPro" id="IPR001400">
    <property type="entry name" value="Somatotropin/Prolactin"/>
</dbReference>
<dbReference type="InterPro" id="IPR018116">
    <property type="entry name" value="Somatotropin_CS"/>
</dbReference>
<dbReference type="PANTHER" id="PTHR11417:SF3">
    <property type="entry name" value="SOMATOLACTIN ALPHA ISOFORM X1-RELATED"/>
    <property type="match status" value="1"/>
</dbReference>
<dbReference type="PANTHER" id="PTHR11417">
    <property type="entry name" value="SOMATOTROPIN,PROLACTIN"/>
    <property type="match status" value="1"/>
</dbReference>
<dbReference type="Pfam" id="PF00103">
    <property type="entry name" value="Hormone_1"/>
    <property type="match status" value="1"/>
</dbReference>
<dbReference type="PRINTS" id="PR00836">
    <property type="entry name" value="SOMATOTROPIN"/>
</dbReference>
<dbReference type="SUPFAM" id="SSF47266">
    <property type="entry name" value="4-helical cytokines"/>
    <property type="match status" value="1"/>
</dbReference>
<dbReference type="PROSITE" id="PS00266">
    <property type="entry name" value="SOMATOTROPIN_1"/>
    <property type="match status" value="1"/>
</dbReference>
<dbReference type="PROSITE" id="PS00338">
    <property type="entry name" value="SOMATOTROPIN_2"/>
    <property type="match status" value="1"/>
</dbReference>
<reference key="1">
    <citation type="journal article" date="1993" name="Mol. Mar. Biol. Biotechnol.">
        <title>Isolation and characterization of somatolactin genes from two cold water marine teleosts, lumpfish (Cyclopterus lumpus) and halibut (Hippoglossus hippoglossus).</title>
        <authorList>
            <person name="Iraqi F."/>
            <person name="Gong Z."/>
            <person name="Hew C.-L."/>
            <person name="Crim L.W."/>
        </authorList>
    </citation>
    <scope>NUCLEOTIDE SEQUENCE [MRNA]</scope>
</reference>
<accession>P45640</accession>
<keyword id="KW-1015">Disulfide bond</keyword>
<keyword id="KW-0325">Glycoprotein</keyword>
<keyword id="KW-0372">Hormone</keyword>
<keyword id="KW-1185">Reference proteome</keyword>
<keyword id="KW-0964">Secreted</keyword>
<keyword id="KW-0732">Signal</keyword>
<evidence type="ECO:0000250" key="1"/>
<evidence type="ECO:0000255" key="2"/>
<evidence type="ECO:0000305" key="3"/>
<name>SOML_CYCLU</name>
<feature type="signal peptide" evidence="2">
    <location>
        <begin position="1"/>
        <end position="24"/>
    </location>
</feature>
<feature type="chain" id="PRO_0000033067" description="Somatolactin">
    <location>
        <begin position="25"/>
        <end position="229"/>
    </location>
</feature>
<feature type="glycosylation site" description="N-linked (GlcNAc...) asparagine" evidence="2">
    <location>
        <position position="143"/>
    </location>
</feature>
<feature type="glycosylation site" description="N-linked (GlcNAc...) asparagine" evidence="2">
    <location>
        <position position="175"/>
    </location>
</feature>
<feature type="disulfide bond" evidence="1">
    <location>
        <begin position="29"/>
        <end position="39"/>
    </location>
</feature>
<feature type="disulfide bond" evidence="1">
    <location>
        <begin position="87"/>
        <end position="203"/>
    </location>
</feature>
<feature type="disulfide bond" evidence="1">
    <location>
        <begin position="220"/>
        <end position="228"/>
    </location>
</feature>
<organism>
    <name type="scientific">Cyclopterus lumpus</name>
    <name type="common">Lumpsucker</name>
    <dbReference type="NCBI Taxonomy" id="8103"/>
    <lineage>
        <taxon>Eukaryota</taxon>
        <taxon>Metazoa</taxon>
        <taxon>Chordata</taxon>
        <taxon>Craniata</taxon>
        <taxon>Vertebrata</taxon>
        <taxon>Euteleostomi</taxon>
        <taxon>Actinopterygii</taxon>
        <taxon>Neopterygii</taxon>
        <taxon>Teleostei</taxon>
        <taxon>Neoteleostei</taxon>
        <taxon>Acanthomorphata</taxon>
        <taxon>Eupercaria</taxon>
        <taxon>Perciformes</taxon>
        <taxon>Cottioidei</taxon>
        <taxon>Cottales</taxon>
        <taxon>Cyclopteridae</taxon>
        <taxon>Cyclopterus</taxon>
    </lineage>
</organism>
<protein>
    <recommendedName>
        <fullName>Somatolactin</fullName>
        <shortName>SL</shortName>
    </recommendedName>
</protein>
<sequence length="229" mass="26413">MHLVSVIQRGVWAVLLWPNLLASSVPLDCREEQGILSRCPSISQEKLLDRVIEHAELIYRVSEESCSLYEDMFIPLQFQRNQVGYACITKTLPVPSSKNEIQQISDKWLLHSVLMLVQSWIEPLVYLQTSLDRYNAAPEMLLNKTKWVSEKLISLEQGVVVLIKKMLDEGMLTINHSEQGLLQNGVQPQMLESVMRDYTLLSCFKKDAHKMEAFLKLLKCRQTDRYNCS</sequence>
<proteinExistence type="evidence at transcript level"/>
<comment type="subcellular location">
    <subcellularLocation>
        <location>Secreted</location>
    </subcellularLocation>
</comment>
<comment type="similarity">
    <text evidence="3">Belongs to the somatotropin/prolactin family.</text>
</comment>